<name>PDXJ_ZYMMO</name>
<organism>
    <name type="scientific">Zymomonas mobilis subsp. mobilis (strain ATCC 31821 / ZM4 / CP4)</name>
    <dbReference type="NCBI Taxonomy" id="264203"/>
    <lineage>
        <taxon>Bacteria</taxon>
        <taxon>Pseudomonadati</taxon>
        <taxon>Pseudomonadota</taxon>
        <taxon>Alphaproteobacteria</taxon>
        <taxon>Sphingomonadales</taxon>
        <taxon>Zymomonadaceae</taxon>
        <taxon>Zymomonas</taxon>
    </lineage>
</organism>
<accession>Q5NLS8</accession>
<sequence length="256" mass="27971">MTKRIRLGVNIDHVATIRNARGGIHPDPVRAAQLAAHAGADGITTHLREDRRHISDDDLINLEKGITLPLNLEMAATEEMLEIALQHRPHAVCLVPEKREEQTTEGGLDAAGQIDSLKPIVAKLLAAGIRVSLFIEPDETQIRAAKALNAPVIELHTGHYANSVNEELAAELIRIEQAAKLAKSLNIEVHAGHGLTYENVIPIAALEEIAELNIGHFLIGEAIFIGLEASIKRMRYLMDAARAEDKVDFLVKHIAL</sequence>
<reference key="1">
    <citation type="journal article" date="2005" name="Nat. Biotechnol.">
        <title>The genome sequence of the ethanologenic bacterium Zymomonas mobilis ZM4.</title>
        <authorList>
            <person name="Seo J.-S."/>
            <person name="Chong H."/>
            <person name="Park H.S."/>
            <person name="Yoon K.-O."/>
            <person name="Jung C."/>
            <person name="Kim J.J."/>
            <person name="Hong J.H."/>
            <person name="Kim H."/>
            <person name="Kim J.-H."/>
            <person name="Kil J.-I."/>
            <person name="Park C.J."/>
            <person name="Oh H.-M."/>
            <person name="Lee J.-S."/>
            <person name="Jin S.-J."/>
            <person name="Um H.-W."/>
            <person name="Lee H.-J."/>
            <person name="Oh S.-J."/>
            <person name="Kim J.Y."/>
            <person name="Kang H.L."/>
            <person name="Lee S.Y."/>
            <person name="Lee K.J."/>
            <person name="Kang H.S."/>
        </authorList>
    </citation>
    <scope>NUCLEOTIDE SEQUENCE [LARGE SCALE GENOMIC DNA]</scope>
    <source>
        <strain>ATCC 31821 / ZM4 / CP4</strain>
    </source>
</reference>
<dbReference type="EC" id="2.6.99.2" evidence="1"/>
<dbReference type="EMBL" id="AE008692">
    <property type="protein sequence ID" value="AAV90332.1"/>
    <property type="molecule type" value="Genomic_DNA"/>
</dbReference>
<dbReference type="RefSeq" id="WP_011241455.1">
    <property type="nucleotide sequence ID" value="NZ_CP035711.1"/>
</dbReference>
<dbReference type="SMR" id="Q5NLS8"/>
<dbReference type="STRING" id="264203.ZMO1708"/>
<dbReference type="KEGG" id="zmo:ZMO1708"/>
<dbReference type="eggNOG" id="COG0854">
    <property type="taxonomic scope" value="Bacteria"/>
</dbReference>
<dbReference type="HOGENOM" id="CLU_074563_0_0_5"/>
<dbReference type="UniPathway" id="UPA00244">
    <property type="reaction ID" value="UER00313"/>
</dbReference>
<dbReference type="Proteomes" id="UP000001173">
    <property type="component" value="Chromosome"/>
</dbReference>
<dbReference type="GO" id="GO:0005829">
    <property type="term" value="C:cytosol"/>
    <property type="evidence" value="ECO:0007669"/>
    <property type="project" value="TreeGrafter"/>
</dbReference>
<dbReference type="GO" id="GO:0033856">
    <property type="term" value="F:pyridoxine 5'-phosphate synthase activity"/>
    <property type="evidence" value="ECO:0007669"/>
    <property type="project" value="UniProtKB-EC"/>
</dbReference>
<dbReference type="GO" id="GO:0008615">
    <property type="term" value="P:pyridoxine biosynthetic process"/>
    <property type="evidence" value="ECO:0007669"/>
    <property type="project" value="UniProtKB-UniRule"/>
</dbReference>
<dbReference type="CDD" id="cd00003">
    <property type="entry name" value="PNPsynthase"/>
    <property type="match status" value="1"/>
</dbReference>
<dbReference type="Gene3D" id="3.20.20.70">
    <property type="entry name" value="Aldolase class I"/>
    <property type="match status" value="1"/>
</dbReference>
<dbReference type="HAMAP" id="MF_00279">
    <property type="entry name" value="PdxJ"/>
    <property type="match status" value="1"/>
</dbReference>
<dbReference type="InterPro" id="IPR013785">
    <property type="entry name" value="Aldolase_TIM"/>
</dbReference>
<dbReference type="InterPro" id="IPR004569">
    <property type="entry name" value="PyrdxlP_synth_PdxJ"/>
</dbReference>
<dbReference type="InterPro" id="IPR036130">
    <property type="entry name" value="Pyridoxine-5'_phos_synth"/>
</dbReference>
<dbReference type="NCBIfam" id="TIGR00559">
    <property type="entry name" value="pdxJ"/>
    <property type="match status" value="1"/>
</dbReference>
<dbReference type="NCBIfam" id="NF003624">
    <property type="entry name" value="PRK05265.1-2"/>
    <property type="match status" value="1"/>
</dbReference>
<dbReference type="NCBIfam" id="NF003625">
    <property type="entry name" value="PRK05265.1-3"/>
    <property type="match status" value="1"/>
</dbReference>
<dbReference type="NCBIfam" id="NF003627">
    <property type="entry name" value="PRK05265.1-5"/>
    <property type="match status" value="1"/>
</dbReference>
<dbReference type="PANTHER" id="PTHR30456">
    <property type="entry name" value="PYRIDOXINE 5'-PHOSPHATE SYNTHASE"/>
    <property type="match status" value="1"/>
</dbReference>
<dbReference type="PANTHER" id="PTHR30456:SF0">
    <property type="entry name" value="PYRIDOXINE 5'-PHOSPHATE SYNTHASE"/>
    <property type="match status" value="1"/>
</dbReference>
<dbReference type="Pfam" id="PF03740">
    <property type="entry name" value="PdxJ"/>
    <property type="match status" value="1"/>
</dbReference>
<dbReference type="SUPFAM" id="SSF63892">
    <property type="entry name" value="Pyridoxine 5'-phosphate synthase"/>
    <property type="match status" value="1"/>
</dbReference>
<protein>
    <recommendedName>
        <fullName evidence="1">Pyridoxine 5'-phosphate synthase</fullName>
        <shortName evidence="1">PNP synthase</shortName>
        <ecNumber evidence="1">2.6.99.2</ecNumber>
    </recommendedName>
</protein>
<feature type="chain" id="PRO_0000231862" description="Pyridoxine 5'-phosphate synthase">
    <location>
        <begin position="1"/>
        <end position="256"/>
    </location>
</feature>
<feature type="active site" description="Proton acceptor" evidence="1">
    <location>
        <position position="46"/>
    </location>
</feature>
<feature type="active site" description="Proton acceptor" evidence="1">
    <location>
        <position position="73"/>
    </location>
</feature>
<feature type="active site" description="Proton donor" evidence="1">
    <location>
        <position position="193"/>
    </location>
</feature>
<feature type="binding site" evidence="1">
    <location>
        <position position="10"/>
    </location>
    <ligand>
        <name>3-amino-2-oxopropyl phosphate</name>
        <dbReference type="ChEBI" id="CHEBI:57279"/>
    </ligand>
</feature>
<feature type="binding site" evidence="1">
    <location>
        <begin position="12"/>
        <end position="13"/>
    </location>
    <ligand>
        <name>1-deoxy-D-xylulose 5-phosphate</name>
        <dbReference type="ChEBI" id="CHEBI:57792"/>
    </ligand>
</feature>
<feature type="binding site" evidence="1">
    <location>
        <position position="21"/>
    </location>
    <ligand>
        <name>3-amino-2-oxopropyl phosphate</name>
        <dbReference type="ChEBI" id="CHEBI:57279"/>
    </ligand>
</feature>
<feature type="binding site" evidence="1">
    <location>
        <position position="48"/>
    </location>
    <ligand>
        <name>1-deoxy-D-xylulose 5-phosphate</name>
        <dbReference type="ChEBI" id="CHEBI:57792"/>
    </ligand>
</feature>
<feature type="binding site" evidence="1">
    <location>
        <position position="53"/>
    </location>
    <ligand>
        <name>1-deoxy-D-xylulose 5-phosphate</name>
        <dbReference type="ChEBI" id="CHEBI:57792"/>
    </ligand>
</feature>
<feature type="binding site" evidence="1">
    <location>
        <position position="103"/>
    </location>
    <ligand>
        <name>1-deoxy-D-xylulose 5-phosphate</name>
        <dbReference type="ChEBI" id="CHEBI:57792"/>
    </ligand>
</feature>
<feature type="binding site" evidence="1">
    <location>
        <position position="194"/>
    </location>
    <ligand>
        <name>3-amino-2-oxopropyl phosphate</name>
        <dbReference type="ChEBI" id="CHEBI:57279"/>
    </ligand>
</feature>
<feature type="binding site" evidence="1">
    <location>
        <begin position="215"/>
        <end position="216"/>
    </location>
    <ligand>
        <name>3-amino-2-oxopropyl phosphate</name>
        <dbReference type="ChEBI" id="CHEBI:57279"/>
    </ligand>
</feature>
<feature type="site" description="Transition state stabilizer" evidence="1">
    <location>
        <position position="154"/>
    </location>
</feature>
<comment type="function">
    <text evidence="1">Catalyzes the complicated ring closure reaction between the two acyclic compounds 1-deoxy-D-xylulose-5-phosphate (DXP) and 3-amino-2-oxopropyl phosphate (1-amino-acetone-3-phosphate or AAP) to form pyridoxine 5'-phosphate (PNP) and inorganic phosphate.</text>
</comment>
<comment type="catalytic activity">
    <reaction evidence="1">
        <text>3-amino-2-oxopropyl phosphate + 1-deoxy-D-xylulose 5-phosphate = pyridoxine 5'-phosphate + phosphate + 2 H2O + H(+)</text>
        <dbReference type="Rhea" id="RHEA:15265"/>
        <dbReference type="ChEBI" id="CHEBI:15377"/>
        <dbReference type="ChEBI" id="CHEBI:15378"/>
        <dbReference type="ChEBI" id="CHEBI:43474"/>
        <dbReference type="ChEBI" id="CHEBI:57279"/>
        <dbReference type="ChEBI" id="CHEBI:57792"/>
        <dbReference type="ChEBI" id="CHEBI:58589"/>
        <dbReference type="EC" id="2.6.99.2"/>
    </reaction>
</comment>
<comment type="pathway">
    <text evidence="1">Cofactor biosynthesis; pyridoxine 5'-phosphate biosynthesis; pyridoxine 5'-phosphate from D-erythrose 4-phosphate: step 5/5.</text>
</comment>
<comment type="subunit">
    <text evidence="1">Homooctamer; tetramer of dimers.</text>
</comment>
<comment type="subcellular location">
    <subcellularLocation>
        <location evidence="1">Cytoplasm</location>
    </subcellularLocation>
</comment>
<comment type="similarity">
    <text evidence="1">Belongs to the PNP synthase family.</text>
</comment>
<gene>
    <name evidence="1" type="primary">pdxJ</name>
    <name type="ordered locus">ZMO1708</name>
</gene>
<keyword id="KW-0963">Cytoplasm</keyword>
<keyword id="KW-0664">Pyridoxine biosynthesis</keyword>
<keyword id="KW-1185">Reference proteome</keyword>
<keyword id="KW-0808">Transferase</keyword>
<proteinExistence type="inferred from homology"/>
<evidence type="ECO:0000255" key="1">
    <source>
        <dbReference type="HAMAP-Rule" id="MF_00279"/>
    </source>
</evidence>